<gene>
    <name evidence="1" type="primary">ruvA</name>
    <name type="ordered locus">Jann_0965</name>
</gene>
<reference key="1">
    <citation type="submission" date="2006-02" db="EMBL/GenBank/DDBJ databases">
        <title>Complete sequence of chromosome of Jannaschia sp. CCS1.</title>
        <authorList>
            <consortium name="US DOE Joint Genome Institute"/>
            <person name="Copeland A."/>
            <person name="Lucas S."/>
            <person name="Lapidus A."/>
            <person name="Barry K."/>
            <person name="Detter J.C."/>
            <person name="Glavina del Rio T."/>
            <person name="Hammon N."/>
            <person name="Israni S."/>
            <person name="Pitluck S."/>
            <person name="Brettin T."/>
            <person name="Bruce D."/>
            <person name="Han C."/>
            <person name="Tapia R."/>
            <person name="Gilna P."/>
            <person name="Chertkov O."/>
            <person name="Saunders E."/>
            <person name="Schmutz J."/>
            <person name="Larimer F."/>
            <person name="Land M."/>
            <person name="Kyrpides N."/>
            <person name="Lykidis A."/>
            <person name="Moran M.A."/>
            <person name="Belas R."/>
            <person name="Ye W."/>
            <person name="Buchan A."/>
            <person name="Gonzalez J.M."/>
            <person name="Schell M.A."/>
            <person name="Richardson P."/>
        </authorList>
    </citation>
    <scope>NUCLEOTIDE SEQUENCE [LARGE SCALE GENOMIC DNA]</scope>
    <source>
        <strain>CCS1</strain>
    </source>
</reference>
<protein>
    <recommendedName>
        <fullName evidence="1">Holliday junction branch migration complex subunit RuvA</fullName>
    </recommendedName>
</protein>
<name>RUVA_JANSC</name>
<comment type="function">
    <text evidence="1">The RuvA-RuvB-RuvC complex processes Holliday junction (HJ) DNA during genetic recombination and DNA repair, while the RuvA-RuvB complex plays an important role in the rescue of blocked DNA replication forks via replication fork reversal (RFR). RuvA specifically binds to HJ cruciform DNA, conferring on it an open structure. The RuvB hexamer acts as an ATP-dependent pump, pulling dsDNA into and through the RuvAB complex. HJ branch migration allows RuvC to scan DNA until it finds its consensus sequence, where it cleaves and resolves the cruciform DNA.</text>
</comment>
<comment type="subunit">
    <text evidence="1">Homotetramer. Forms an RuvA(8)-RuvB(12)-Holliday junction (HJ) complex. HJ DNA is sandwiched between 2 RuvA tetramers; dsDNA enters through RuvA and exits via RuvB. An RuvB hexamer assembles on each DNA strand where it exits the tetramer. Each RuvB hexamer is contacted by two RuvA subunits (via domain III) on 2 adjacent RuvB subunits; this complex drives branch migration. In the full resolvosome a probable DNA-RuvA(4)-RuvB(12)-RuvC(2) complex forms which resolves the HJ.</text>
</comment>
<comment type="subcellular location">
    <subcellularLocation>
        <location evidence="1">Cytoplasm</location>
    </subcellularLocation>
</comment>
<comment type="domain">
    <text evidence="1">Has three domains with a flexible linker between the domains II and III and assumes an 'L' shape. Domain III is highly mobile and contacts RuvB.</text>
</comment>
<comment type="similarity">
    <text evidence="1">Belongs to the RuvA family.</text>
</comment>
<feature type="chain" id="PRO_1000002465" description="Holliday junction branch migration complex subunit RuvA">
    <location>
        <begin position="1"/>
        <end position="223"/>
    </location>
</feature>
<feature type="region of interest" description="Domain I" evidence="1">
    <location>
        <begin position="1"/>
        <end position="64"/>
    </location>
</feature>
<feature type="region of interest" description="Domain II" evidence="1">
    <location>
        <begin position="65"/>
        <end position="143"/>
    </location>
</feature>
<feature type="region of interest" description="Flexible linker" evidence="1">
    <location>
        <begin position="144"/>
        <end position="171"/>
    </location>
</feature>
<feature type="region of interest" description="Disordered" evidence="2">
    <location>
        <begin position="148"/>
        <end position="177"/>
    </location>
</feature>
<feature type="region of interest" description="Domain III" evidence="1">
    <location>
        <begin position="172"/>
        <end position="223"/>
    </location>
</feature>
<proteinExistence type="inferred from homology"/>
<organism>
    <name type="scientific">Jannaschia sp. (strain CCS1)</name>
    <dbReference type="NCBI Taxonomy" id="290400"/>
    <lineage>
        <taxon>Bacteria</taxon>
        <taxon>Pseudomonadati</taxon>
        <taxon>Pseudomonadota</taxon>
        <taxon>Alphaproteobacteria</taxon>
        <taxon>Rhodobacterales</taxon>
        <taxon>Roseobacteraceae</taxon>
        <taxon>Jannaschia</taxon>
    </lineage>
</organism>
<sequence>MIGKLTGRLDYKGSDHALIDVGGVGYVVHCSDRTLAALPARGEVVALYTDLLVREDLLQLFGFLSPYEKEWHRLLTSVQGVGAKASMAILGTLGVEGAARAITLGDATAIKAAPGVGPKLAQRVVMELKDKAPAVMAMGGTLDDAMDDVVDDMPGESAAPAPAPQPRAPKRPASNAQAEALSALQNLGYGPSDAAQAVAQAAESASNTPELIRAALRLLAPKE</sequence>
<dbReference type="EMBL" id="CP000264">
    <property type="protein sequence ID" value="ABD53882.1"/>
    <property type="molecule type" value="Genomic_DNA"/>
</dbReference>
<dbReference type="RefSeq" id="WP_011454090.1">
    <property type="nucleotide sequence ID" value="NC_007802.1"/>
</dbReference>
<dbReference type="SMR" id="Q28TT0"/>
<dbReference type="STRING" id="290400.Jann_0965"/>
<dbReference type="KEGG" id="jan:Jann_0965"/>
<dbReference type="eggNOG" id="COG0632">
    <property type="taxonomic scope" value="Bacteria"/>
</dbReference>
<dbReference type="HOGENOM" id="CLU_087936_3_0_5"/>
<dbReference type="OrthoDB" id="5293449at2"/>
<dbReference type="Proteomes" id="UP000008326">
    <property type="component" value="Chromosome"/>
</dbReference>
<dbReference type="GO" id="GO:0005737">
    <property type="term" value="C:cytoplasm"/>
    <property type="evidence" value="ECO:0007669"/>
    <property type="project" value="UniProtKB-SubCell"/>
</dbReference>
<dbReference type="GO" id="GO:0009379">
    <property type="term" value="C:Holliday junction helicase complex"/>
    <property type="evidence" value="ECO:0007669"/>
    <property type="project" value="InterPro"/>
</dbReference>
<dbReference type="GO" id="GO:0048476">
    <property type="term" value="C:Holliday junction resolvase complex"/>
    <property type="evidence" value="ECO:0007669"/>
    <property type="project" value="UniProtKB-UniRule"/>
</dbReference>
<dbReference type="GO" id="GO:0005524">
    <property type="term" value="F:ATP binding"/>
    <property type="evidence" value="ECO:0007669"/>
    <property type="project" value="InterPro"/>
</dbReference>
<dbReference type="GO" id="GO:0000400">
    <property type="term" value="F:four-way junction DNA binding"/>
    <property type="evidence" value="ECO:0007669"/>
    <property type="project" value="UniProtKB-UniRule"/>
</dbReference>
<dbReference type="GO" id="GO:0009378">
    <property type="term" value="F:four-way junction helicase activity"/>
    <property type="evidence" value="ECO:0007669"/>
    <property type="project" value="InterPro"/>
</dbReference>
<dbReference type="GO" id="GO:0006310">
    <property type="term" value="P:DNA recombination"/>
    <property type="evidence" value="ECO:0007669"/>
    <property type="project" value="UniProtKB-UniRule"/>
</dbReference>
<dbReference type="GO" id="GO:0006281">
    <property type="term" value="P:DNA repair"/>
    <property type="evidence" value="ECO:0007669"/>
    <property type="project" value="UniProtKB-UniRule"/>
</dbReference>
<dbReference type="Gene3D" id="1.10.150.20">
    <property type="entry name" value="5' to 3' exonuclease, C-terminal subdomain"/>
    <property type="match status" value="1"/>
</dbReference>
<dbReference type="Gene3D" id="1.10.8.10">
    <property type="entry name" value="DNA helicase RuvA subunit, C-terminal domain"/>
    <property type="match status" value="1"/>
</dbReference>
<dbReference type="Gene3D" id="2.40.50.140">
    <property type="entry name" value="Nucleic acid-binding proteins"/>
    <property type="match status" value="1"/>
</dbReference>
<dbReference type="HAMAP" id="MF_00031">
    <property type="entry name" value="DNA_HJ_migration_RuvA"/>
    <property type="match status" value="1"/>
</dbReference>
<dbReference type="InterPro" id="IPR013849">
    <property type="entry name" value="DNA_helicase_Holl-junc_RuvA_I"/>
</dbReference>
<dbReference type="InterPro" id="IPR012340">
    <property type="entry name" value="NA-bd_OB-fold"/>
</dbReference>
<dbReference type="InterPro" id="IPR000085">
    <property type="entry name" value="RuvA"/>
</dbReference>
<dbReference type="InterPro" id="IPR010994">
    <property type="entry name" value="RuvA_2-like"/>
</dbReference>
<dbReference type="InterPro" id="IPR011114">
    <property type="entry name" value="RuvA_C"/>
</dbReference>
<dbReference type="InterPro" id="IPR036267">
    <property type="entry name" value="RuvA_C_sf"/>
</dbReference>
<dbReference type="NCBIfam" id="TIGR00084">
    <property type="entry name" value="ruvA"/>
    <property type="match status" value="1"/>
</dbReference>
<dbReference type="Pfam" id="PF14520">
    <property type="entry name" value="HHH_5"/>
    <property type="match status" value="1"/>
</dbReference>
<dbReference type="Pfam" id="PF07499">
    <property type="entry name" value="RuvA_C"/>
    <property type="match status" value="1"/>
</dbReference>
<dbReference type="Pfam" id="PF01330">
    <property type="entry name" value="RuvA_N"/>
    <property type="match status" value="1"/>
</dbReference>
<dbReference type="SUPFAM" id="SSF46929">
    <property type="entry name" value="DNA helicase RuvA subunit, C-terminal domain"/>
    <property type="match status" value="1"/>
</dbReference>
<dbReference type="SUPFAM" id="SSF50249">
    <property type="entry name" value="Nucleic acid-binding proteins"/>
    <property type="match status" value="1"/>
</dbReference>
<dbReference type="SUPFAM" id="SSF47781">
    <property type="entry name" value="RuvA domain 2-like"/>
    <property type="match status" value="1"/>
</dbReference>
<evidence type="ECO:0000255" key="1">
    <source>
        <dbReference type="HAMAP-Rule" id="MF_00031"/>
    </source>
</evidence>
<evidence type="ECO:0000256" key="2">
    <source>
        <dbReference type="SAM" id="MobiDB-lite"/>
    </source>
</evidence>
<keyword id="KW-0963">Cytoplasm</keyword>
<keyword id="KW-0227">DNA damage</keyword>
<keyword id="KW-0233">DNA recombination</keyword>
<keyword id="KW-0234">DNA repair</keyword>
<keyword id="KW-0238">DNA-binding</keyword>
<keyword id="KW-1185">Reference proteome</keyword>
<accession>Q28TT0</accession>